<protein>
    <recommendedName>
        <fullName evidence="1">Protein translocase subunit SecA</fullName>
        <ecNumber evidence="1">7.4.2.8</ecNumber>
    </recommendedName>
</protein>
<proteinExistence type="inferred from homology"/>
<gene>
    <name evidence="1" type="primary">secA</name>
    <name type="ordered locus">FTM_1319</name>
</gene>
<feature type="chain" id="PRO_1000145016" description="Protein translocase subunit SecA">
    <location>
        <begin position="1"/>
        <end position="906"/>
    </location>
</feature>
<feature type="region of interest" description="Disordered" evidence="2">
    <location>
        <begin position="853"/>
        <end position="906"/>
    </location>
</feature>
<feature type="compositionally biased region" description="Basic and acidic residues" evidence="2">
    <location>
        <begin position="853"/>
        <end position="865"/>
    </location>
</feature>
<feature type="compositionally biased region" description="Basic and acidic residues" evidence="2">
    <location>
        <begin position="877"/>
        <end position="888"/>
    </location>
</feature>
<feature type="compositionally biased region" description="Basic residues" evidence="2">
    <location>
        <begin position="896"/>
        <end position="906"/>
    </location>
</feature>
<feature type="binding site" evidence="1">
    <location>
        <position position="86"/>
    </location>
    <ligand>
        <name>ATP</name>
        <dbReference type="ChEBI" id="CHEBI:30616"/>
    </ligand>
</feature>
<feature type="binding site" evidence="1">
    <location>
        <begin position="104"/>
        <end position="108"/>
    </location>
    <ligand>
        <name>ATP</name>
        <dbReference type="ChEBI" id="CHEBI:30616"/>
    </ligand>
</feature>
<feature type="binding site" evidence="1">
    <location>
        <position position="511"/>
    </location>
    <ligand>
        <name>ATP</name>
        <dbReference type="ChEBI" id="CHEBI:30616"/>
    </ligand>
</feature>
<feature type="binding site" evidence="1">
    <location>
        <position position="890"/>
    </location>
    <ligand>
        <name>Zn(2+)</name>
        <dbReference type="ChEBI" id="CHEBI:29105"/>
    </ligand>
</feature>
<feature type="binding site" evidence="1">
    <location>
        <position position="892"/>
    </location>
    <ligand>
        <name>Zn(2+)</name>
        <dbReference type="ChEBI" id="CHEBI:29105"/>
    </ligand>
</feature>
<feature type="binding site" evidence="1">
    <location>
        <position position="901"/>
    </location>
    <ligand>
        <name>Zn(2+)</name>
        <dbReference type="ChEBI" id="CHEBI:29105"/>
    </ligand>
</feature>
<feature type="binding site" evidence="1">
    <location>
        <position position="902"/>
    </location>
    <ligand>
        <name>Zn(2+)</name>
        <dbReference type="ChEBI" id="CHEBI:29105"/>
    </ligand>
</feature>
<organism>
    <name type="scientific">Francisella tularensis subsp. mediasiatica (strain FSC147)</name>
    <dbReference type="NCBI Taxonomy" id="441952"/>
    <lineage>
        <taxon>Bacteria</taxon>
        <taxon>Pseudomonadati</taxon>
        <taxon>Pseudomonadota</taxon>
        <taxon>Gammaproteobacteria</taxon>
        <taxon>Thiotrichales</taxon>
        <taxon>Francisellaceae</taxon>
        <taxon>Francisella</taxon>
    </lineage>
</organism>
<reference key="1">
    <citation type="journal article" date="2009" name="PLoS Pathog.">
        <title>Molecular evolutionary consequences of niche restriction in Francisella tularensis, a facultative intracellular pathogen.</title>
        <authorList>
            <person name="Larsson P."/>
            <person name="Elfsmark D."/>
            <person name="Svensson K."/>
            <person name="Wikstroem P."/>
            <person name="Forsman M."/>
            <person name="Brettin T."/>
            <person name="Keim P."/>
            <person name="Johansson A."/>
        </authorList>
    </citation>
    <scope>NUCLEOTIDE SEQUENCE [LARGE SCALE GENOMIC DNA]</scope>
    <source>
        <strain>FSC147</strain>
    </source>
</reference>
<keyword id="KW-0067">ATP-binding</keyword>
<keyword id="KW-0997">Cell inner membrane</keyword>
<keyword id="KW-1003">Cell membrane</keyword>
<keyword id="KW-0963">Cytoplasm</keyword>
<keyword id="KW-0472">Membrane</keyword>
<keyword id="KW-0479">Metal-binding</keyword>
<keyword id="KW-0547">Nucleotide-binding</keyword>
<keyword id="KW-0653">Protein transport</keyword>
<keyword id="KW-1278">Translocase</keyword>
<keyword id="KW-0811">Translocation</keyword>
<keyword id="KW-0813">Transport</keyword>
<keyword id="KW-0862">Zinc</keyword>
<accession>B2SDE9</accession>
<name>SECA_FRATM</name>
<comment type="function">
    <text evidence="1">Part of the Sec protein translocase complex. Interacts with the SecYEG preprotein conducting channel. Has a central role in coupling the hydrolysis of ATP to the transfer of proteins into and across the cell membrane, serving both as a receptor for the preprotein-SecB complex and as an ATP-driven molecular motor driving the stepwise translocation of polypeptide chains across the membrane.</text>
</comment>
<comment type="catalytic activity">
    <reaction evidence="1">
        <text>ATP + H2O + cellular proteinSide 1 = ADP + phosphate + cellular proteinSide 2.</text>
        <dbReference type="EC" id="7.4.2.8"/>
    </reaction>
</comment>
<comment type="cofactor">
    <cofactor evidence="1">
        <name>Zn(2+)</name>
        <dbReference type="ChEBI" id="CHEBI:29105"/>
    </cofactor>
    <text evidence="1">May bind 1 zinc ion per subunit.</text>
</comment>
<comment type="subunit">
    <text evidence="1">Monomer and homodimer. Part of the essential Sec protein translocation apparatus which comprises SecA, SecYEG and auxiliary proteins SecDF-YajC and YidC.</text>
</comment>
<comment type="subcellular location">
    <subcellularLocation>
        <location evidence="1">Cell inner membrane</location>
        <topology evidence="1">Peripheral membrane protein</topology>
        <orientation evidence="1">Cytoplasmic side</orientation>
    </subcellularLocation>
    <subcellularLocation>
        <location evidence="1">Cytoplasm</location>
    </subcellularLocation>
    <text evidence="1">Distribution is 50-50.</text>
</comment>
<comment type="similarity">
    <text evidence="1">Belongs to the SecA family.</text>
</comment>
<dbReference type="EC" id="7.4.2.8" evidence="1"/>
<dbReference type="EMBL" id="CP000915">
    <property type="protein sequence ID" value="ACD31163.1"/>
    <property type="molecule type" value="Genomic_DNA"/>
</dbReference>
<dbReference type="SMR" id="B2SDE9"/>
<dbReference type="KEGG" id="ftm:FTM_1319"/>
<dbReference type="HOGENOM" id="CLU_005314_3_0_6"/>
<dbReference type="GO" id="GO:0031522">
    <property type="term" value="C:cell envelope Sec protein transport complex"/>
    <property type="evidence" value="ECO:0007669"/>
    <property type="project" value="TreeGrafter"/>
</dbReference>
<dbReference type="GO" id="GO:0005829">
    <property type="term" value="C:cytosol"/>
    <property type="evidence" value="ECO:0007669"/>
    <property type="project" value="TreeGrafter"/>
</dbReference>
<dbReference type="GO" id="GO:0005886">
    <property type="term" value="C:plasma membrane"/>
    <property type="evidence" value="ECO:0007669"/>
    <property type="project" value="UniProtKB-SubCell"/>
</dbReference>
<dbReference type="GO" id="GO:0005524">
    <property type="term" value="F:ATP binding"/>
    <property type="evidence" value="ECO:0007669"/>
    <property type="project" value="UniProtKB-UniRule"/>
</dbReference>
<dbReference type="GO" id="GO:0046872">
    <property type="term" value="F:metal ion binding"/>
    <property type="evidence" value="ECO:0007669"/>
    <property type="project" value="UniProtKB-KW"/>
</dbReference>
<dbReference type="GO" id="GO:0008564">
    <property type="term" value="F:protein-exporting ATPase activity"/>
    <property type="evidence" value="ECO:0007669"/>
    <property type="project" value="UniProtKB-EC"/>
</dbReference>
<dbReference type="GO" id="GO:0065002">
    <property type="term" value="P:intracellular protein transmembrane transport"/>
    <property type="evidence" value="ECO:0007669"/>
    <property type="project" value="UniProtKB-UniRule"/>
</dbReference>
<dbReference type="GO" id="GO:0017038">
    <property type="term" value="P:protein import"/>
    <property type="evidence" value="ECO:0007669"/>
    <property type="project" value="InterPro"/>
</dbReference>
<dbReference type="GO" id="GO:0006605">
    <property type="term" value="P:protein targeting"/>
    <property type="evidence" value="ECO:0007669"/>
    <property type="project" value="UniProtKB-UniRule"/>
</dbReference>
<dbReference type="GO" id="GO:0043952">
    <property type="term" value="P:protein transport by the Sec complex"/>
    <property type="evidence" value="ECO:0007669"/>
    <property type="project" value="TreeGrafter"/>
</dbReference>
<dbReference type="CDD" id="cd17928">
    <property type="entry name" value="DEXDc_SecA"/>
    <property type="match status" value="1"/>
</dbReference>
<dbReference type="CDD" id="cd18803">
    <property type="entry name" value="SF2_C_secA"/>
    <property type="match status" value="1"/>
</dbReference>
<dbReference type="FunFam" id="3.40.50.300:FF:000113">
    <property type="entry name" value="Preprotein translocase subunit SecA"/>
    <property type="match status" value="1"/>
</dbReference>
<dbReference type="FunFam" id="3.90.1440.10:FF:000001">
    <property type="entry name" value="Preprotein translocase subunit SecA"/>
    <property type="match status" value="1"/>
</dbReference>
<dbReference type="FunFam" id="1.10.3060.10:FF:000003">
    <property type="entry name" value="Protein translocase subunit SecA"/>
    <property type="match status" value="1"/>
</dbReference>
<dbReference type="FunFam" id="3.40.50.300:FF:000334">
    <property type="entry name" value="Protein translocase subunit SecA"/>
    <property type="match status" value="1"/>
</dbReference>
<dbReference type="Gene3D" id="1.10.3060.10">
    <property type="entry name" value="Helical scaffold and wing domains of SecA"/>
    <property type="match status" value="1"/>
</dbReference>
<dbReference type="Gene3D" id="3.40.50.300">
    <property type="entry name" value="P-loop containing nucleotide triphosphate hydrolases"/>
    <property type="match status" value="2"/>
</dbReference>
<dbReference type="Gene3D" id="3.90.1440.10">
    <property type="entry name" value="SecA, preprotein cross-linking domain"/>
    <property type="match status" value="1"/>
</dbReference>
<dbReference type="HAMAP" id="MF_01382">
    <property type="entry name" value="SecA"/>
    <property type="match status" value="1"/>
</dbReference>
<dbReference type="InterPro" id="IPR014001">
    <property type="entry name" value="Helicase_ATP-bd"/>
</dbReference>
<dbReference type="InterPro" id="IPR001650">
    <property type="entry name" value="Helicase_C-like"/>
</dbReference>
<dbReference type="InterPro" id="IPR027417">
    <property type="entry name" value="P-loop_NTPase"/>
</dbReference>
<dbReference type="InterPro" id="IPR004027">
    <property type="entry name" value="SEC_C_motif"/>
</dbReference>
<dbReference type="InterPro" id="IPR000185">
    <property type="entry name" value="SecA"/>
</dbReference>
<dbReference type="InterPro" id="IPR020937">
    <property type="entry name" value="SecA_CS"/>
</dbReference>
<dbReference type="InterPro" id="IPR011115">
    <property type="entry name" value="SecA_DEAD"/>
</dbReference>
<dbReference type="InterPro" id="IPR014018">
    <property type="entry name" value="SecA_motor_DEAD"/>
</dbReference>
<dbReference type="InterPro" id="IPR011130">
    <property type="entry name" value="SecA_preprotein_X-link_dom"/>
</dbReference>
<dbReference type="InterPro" id="IPR044722">
    <property type="entry name" value="SecA_SF2_C"/>
</dbReference>
<dbReference type="InterPro" id="IPR011116">
    <property type="entry name" value="SecA_Wing/Scaffold"/>
</dbReference>
<dbReference type="InterPro" id="IPR036266">
    <property type="entry name" value="SecA_Wing/Scaffold_sf"/>
</dbReference>
<dbReference type="InterPro" id="IPR036670">
    <property type="entry name" value="SecA_X-link_sf"/>
</dbReference>
<dbReference type="NCBIfam" id="NF009538">
    <property type="entry name" value="PRK12904.1"/>
    <property type="match status" value="1"/>
</dbReference>
<dbReference type="NCBIfam" id="TIGR00963">
    <property type="entry name" value="secA"/>
    <property type="match status" value="1"/>
</dbReference>
<dbReference type="PANTHER" id="PTHR30612:SF0">
    <property type="entry name" value="CHLOROPLAST PROTEIN-TRANSPORTING ATPASE"/>
    <property type="match status" value="1"/>
</dbReference>
<dbReference type="PANTHER" id="PTHR30612">
    <property type="entry name" value="SECA INNER MEMBRANE COMPONENT OF SEC PROTEIN SECRETION SYSTEM"/>
    <property type="match status" value="1"/>
</dbReference>
<dbReference type="Pfam" id="PF21090">
    <property type="entry name" value="P-loop_SecA"/>
    <property type="match status" value="1"/>
</dbReference>
<dbReference type="Pfam" id="PF02810">
    <property type="entry name" value="SEC-C"/>
    <property type="match status" value="1"/>
</dbReference>
<dbReference type="Pfam" id="PF07517">
    <property type="entry name" value="SecA_DEAD"/>
    <property type="match status" value="1"/>
</dbReference>
<dbReference type="Pfam" id="PF01043">
    <property type="entry name" value="SecA_PP_bind"/>
    <property type="match status" value="1"/>
</dbReference>
<dbReference type="Pfam" id="PF07516">
    <property type="entry name" value="SecA_SW"/>
    <property type="match status" value="1"/>
</dbReference>
<dbReference type="PRINTS" id="PR00906">
    <property type="entry name" value="SECA"/>
</dbReference>
<dbReference type="SMART" id="SM00957">
    <property type="entry name" value="SecA_DEAD"/>
    <property type="match status" value="1"/>
</dbReference>
<dbReference type="SMART" id="SM00958">
    <property type="entry name" value="SecA_PP_bind"/>
    <property type="match status" value="1"/>
</dbReference>
<dbReference type="SUPFAM" id="SSF81886">
    <property type="entry name" value="Helical scaffold and wing domains of SecA"/>
    <property type="match status" value="1"/>
</dbReference>
<dbReference type="SUPFAM" id="SSF52540">
    <property type="entry name" value="P-loop containing nucleoside triphosphate hydrolases"/>
    <property type="match status" value="2"/>
</dbReference>
<dbReference type="SUPFAM" id="SSF81767">
    <property type="entry name" value="Pre-protein crosslinking domain of SecA"/>
    <property type="match status" value="1"/>
</dbReference>
<dbReference type="PROSITE" id="PS01312">
    <property type="entry name" value="SECA"/>
    <property type="match status" value="1"/>
</dbReference>
<dbReference type="PROSITE" id="PS51196">
    <property type="entry name" value="SECA_MOTOR_DEAD"/>
    <property type="match status" value="1"/>
</dbReference>
<sequence>MLSLVQKIIGSRNERFIKKVSRIVQKINSLEPEFEKLSDEQLKAKTFEYRERLANGEILDNLLPEAFATVREAGKRTKNMRHYDVQLIGGIVLHQGKVAEMRTGEGKTLVATLPAYLNALTCDGVHVITVNDYLAKRDAELMSDIYEFLGMSVGVIVADLNPQQRKEAYACDITYGTNNEFGFDYLRDNMAYEKEQQVQRSRNYAIIDEVDSILIDEARTPLIISGASDDSSEMYNLFNRLVPYLEKQEKEEVENEQEQRDFYVDEKSKNAYLTEKGYAKIENMLKKEGILEEDDNLYSPHNITKMHYLNACLRAHSLYQLNIDYIVRDREIVIIDESTGRAMPGRRWSDGLHQAIEAKEGVKINAENQTMASITFQNFFKLYNKIAGMTGTADTEAFELHSIYGLEVIIIPTNKPMIRKDHHDEIYGSVREKFDAIVEDIKERISKGQPVLVGTASIEASEVLSTLLKKKKIRHNVLNAKQHEKEASIIAMAGYPDNVTIATNMAGRGTDIILGGNLEVEIAQLEDPTPEDIAQIKAEWLKRNEAVKKAGGLCIIGSERHDSRRIDNQLRGRAARQGDPGESKFYLSMDDNLLRIFASQSMAERVKKGLKGGESLAFGFMSKVISKAQGKVESYHFDIRKNLLEYDNVVNTQRKVIYEQRQSFLEAEDVSDILADIRIDVAEQLFHDYVPAGSMHELWDLEGLEKALKSDFMIELDLQKLYEEDDSLGEEDLKRLVREAIEIEFVEKTKNLDSGAVRQFEKFSLLQSLDTHWREHLSSIDHLRNSINLRGYAQKDPKNEYKKEAFELFSTMLDNFKYEVISSLAKIRIVTEEETQRAQQEWQESMSDIKAEHESVIDNNQRHDEDEQEEAPKVQQVRREGPKVKRNDPCPCGSGKKYKQCHSKVE</sequence>
<evidence type="ECO:0000255" key="1">
    <source>
        <dbReference type="HAMAP-Rule" id="MF_01382"/>
    </source>
</evidence>
<evidence type="ECO:0000256" key="2">
    <source>
        <dbReference type="SAM" id="MobiDB-lite"/>
    </source>
</evidence>